<name>GGTL2_HUMAN</name>
<accession>Q14390</accession>
<accession>A1A516</accession>
<accession>A2VCM9</accession>
<accession>Q5NV76</accession>
<accession>Q6ISH0</accession>
<comment type="interaction">
    <interactant intactId="EBI-12903880">
        <id>Q14390</id>
    </interactant>
    <interactant intactId="EBI-3939165">
        <id>O43711</id>
        <label>TLX3</label>
    </interactant>
    <organismsDiffer>false</organismsDiffer>
    <experiments>3</experiments>
</comment>
<comment type="tissue specificity">
    <text>Placenta and sigmoid tissues.</text>
</comment>
<comment type="miscellaneous">
    <text>Corresponds to the light chain of other gamma-glutamyltransferase family members. Has no catalytic activity.</text>
</comment>
<comment type="similarity">
    <text evidence="4">Belongs to the gamma-glutamyltransferase family.</text>
</comment>
<comment type="sequence caution" evidence="4">
    <conflict type="erroneous gene model prediction">
        <sequence resource="EMBL-CDS" id="BAA20001"/>
    </conflict>
</comment>
<comment type="sequence caution" evidence="4">
    <conflict type="frameshift">
        <sequence resource="EMBL-CDS" id="CAA67421"/>
    </conflict>
</comment>
<comment type="sequence caution" evidence="4">
    <conflict type="miscellaneous discrepancy">
        <sequence resource="EMBL-CDS" id="CAA67421"/>
    </conflict>
    <text>Contains an unspliced intron inserted in position 120.</text>
</comment>
<keyword id="KW-1267">Proteomics identification</keyword>
<keyword id="KW-1185">Reference proteome</keyword>
<protein>
    <recommendedName>
        <fullName>Glutathione hydrolase light chain 2</fullName>
    </recommendedName>
    <alternativeName>
        <fullName>Gamma-glutamyltransferase light chain 2</fullName>
    </alternativeName>
    <alternativeName>
        <fullName>Gamma-glutamyltransferase-like protein 4</fullName>
    </alternativeName>
</protein>
<gene>
    <name type="primary">GGTLC2</name>
    <name type="synonym">GGTL4</name>
</gene>
<evidence type="ECO:0000250" key="1"/>
<evidence type="ECO:0000269" key="2">
    <source>
    </source>
</evidence>
<evidence type="ECO:0000269" key="3">
    <source>
    </source>
</evidence>
<evidence type="ECO:0000305" key="4"/>
<proteinExistence type="evidence at protein level"/>
<reference key="1">
    <citation type="journal article" date="1996" name="FEBS Lett.">
        <title>Cloning and expression of a novel type (III) of human gamma-glutamyltransferase truncated mRNA.</title>
        <authorList>
            <person name="Leh L."/>
            <person name="Courtey C."/>
            <person name="Gerardin P."/>
            <person name="Wellman M."/>
            <person name="Siest G."/>
            <person name="Visvikis A."/>
        </authorList>
    </citation>
    <scope>NUCLEOTIDE SEQUENCE [MRNA]</scope>
    <scope>VARIANT GLY-70</scope>
    <source>
        <tissue>Placenta</tissue>
    </source>
</reference>
<reference key="2">
    <citation type="journal article" date="1997" name="Genome Res.">
        <title>One-megabase sequence analysis of the human immunoglobulin lambda gene locus.</title>
        <authorList>
            <person name="Kawasaki K."/>
            <person name="Minoshima S."/>
            <person name="Nakato E."/>
            <person name="Shibuya K."/>
            <person name="Shintani A."/>
            <person name="Schmeits J.L."/>
            <person name="Wang J."/>
            <person name="Shimizu N."/>
        </authorList>
    </citation>
    <scope>NUCLEOTIDE SEQUENCE [GENOMIC DNA]</scope>
</reference>
<reference key="3">
    <citation type="journal article" date="1999" name="Nature">
        <title>The DNA sequence of human chromosome 22.</title>
        <authorList>
            <person name="Dunham I."/>
            <person name="Hunt A.R."/>
            <person name="Collins J.E."/>
            <person name="Bruskiewich R."/>
            <person name="Beare D.M."/>
            <person name="Clamp M."/>
            <person name="Smink L.J."/>
            <person name="Ainscough R."/>
            <person name="Almeida J.P."/>
            <person name="Babbage A.K."/>
            <person name="Bagguley C."/>
            <person name="Bailey J."/>
            <person name="Barlow K.F."/>
            <person name="Bates K.N."/>
            <person name="Beasley O.P."/>
            <person name="Bird C.P."/>
            <person name="Blakey S.E."/>
            <person name="Bridgeman A.M."/>
            <person name="Buck D."/>
            <person name="Burgess J."/>
            <person name="Burrill W.D."/>
            <person name="Burton J."/>
            <person name="Carder C."/>
            <person name="Carter N.P."/>
            <person name="Chen Y."/>
            <person name="Clark G."/>
            <person name="Clegg S.M."/>
            <person name="Cobley V.E."/>
            <person name="Cole C.G."/>
            <person name="Collier R.E."/>
            <person name="Connor R."/>
            <person name="Conroy D."/>
            <person name="Corby N.R."/>
            <person name="Coville G.J."/>
            <person name="Cox A.V."/>
            <person name="Davis J."/>
            <person name="Dawson E."/>
            <person name="Dhami P.D."/>
            <person name="Dockree C."/>
            <person name="Dodsworth S.J."/>
            <person name="Durbin R.M."/>
            <person name="Ellington A.G."/>
            <person name="Evans K.L."/>
            <person name="Fey J.M."/>
            <person name="Fleming K."/>
            <person name="French L."/>
            <person name="Garner A.A."/>
            <person name="Gilbert J.G.R."/>
            <person name="Goward M.E."/>
            <person name="Grafham D.V."/>
            <person name="Griffiths M.N.D."/>
            <person name="Hall C."/>
            <person name="Hall R.E."/>
            <person name="Hall-Tamlyn G."/>
            <person name="Heathcott R.W."/>
            <person name="Ho S."/>
            <person name="Holmes S."/>
            <person name="Hunt S.E."/>
            <person name="Jones M.C."/>
            <person name="Kershaw J."/>
            <person name="Kimberley A.M."/>
            <person name="King A."/>
            <person name="Laird G.K."/>
            <person name="Langford C.F."/>
            <person name="Leversha M.A."/>
            <person name="Lloyd C."/>
            <person name="Lloyd D.M."/>
            <person name="Martyn I.D."/>
            <person name="Mashreghi-Mohammadi M."/>
            <person name="Matthews L.H."/>
            <person name="Mccann O.T."/>
            <person name="Mcclay J."/>
            <person name="Mclaren S."/>
            <person name="McMurray A.A."/>
            <person name="Milne S.A."/>
            <person name="Mortimore B.J."/>
            <person name="Odell C.N."/>
            <person name="Pavitt R."/>
            <person name="Pearce A.V."/>
            <person name="Pearson D."/>
            <person name="Phillimore B.J.C.T."/>
            <person name="Phillips S.H."/>
            <person name="Plumb R.W."/>
            <person name="Ramsay H."/>
            <person name="Ramsey Y."/>
            <person name="Rogers L."/>
            <person name="Ross M.T."/>
            <person name="Scott C.E."/>
            <person name="Sehra H.K."/>
            <person name="Skuce C.D."/>
            <person name="Smalley S."/>
            <person name="Smith M.L."/>
            <person name="Soderlund C."/>
            <person name="Spragon L."/>
            <person name="Steward C.A."/>
            <person name="Sulston J.E."/>
            <person name="Swann R.M."/>
            <person name="Vaudin M."/>
            <person name="Wall M."/>
            <person name="Wallis J.M."/>
            <person name="Whiteley M.N."/>
            <person name="Willey D.L."/>
            <person name="Williams L."/>
            <person name="Williams S.A."/>
            <person name="Williamson H."/>
            <person name="Wilmer T.E."/>
            <person name="Wilming L."/>
            <person name="Wright C.L."/>
            <person name="Hubbard T."/>
            <person name="Bentley D.R."/>
            <person name="Beck S."/>
            <person name="Rogers J."/>
            <person name="Shimizu N."/>
            <person name="Minoshima S."/>
            <person name="Kawasaki K."/>
            <person name="Sasaki T."/>
            <person name="Asakawa S."/>
            <person name="Kudoh J."/>
            <person name="Shintani A."/>
            <person name="Shibuya K."/>
            <person name="Yoshizaki Y."/>
            <person name="Aoki N."/>
            <person name="Mitsuyama S."/>
            <person name="Roe B.A."/>
            <person name="Chen F."/>
            <person name="Chu L."/>
            <person name="Crabtree J."/>
            <person name="Deschamps S."/>
            <person name="Do A."/>
            <person name="Do T."/>
            <person name="Dorman A."/>
            <person name="Fang F."/>
            <person name="Fu Y."/>
            <person name="Hu P."/>
            <person name="Hua A."/>
            <person name="Kenton S."/>
            <person name="Lai H."/>
            <person name="Lao H.I."/>
            <person name="Lewis J."/>
            <person name="Lewis S."/>
            <person name="Lin S.-P."/>
            <person name="Loh P."/>
            <person name="Malaj E."/>
            <person name="Nguyen T."/>
            <person name="Pan H."/>
            <person name="Phan S."/>
            <person name="Qi S."/>
            <person name="Qian Y."/>
            <person name="Ray L."/>
            <person name="Ren Q."/>
            <person name="Shaull S."/>
            <person name="Sloan D."/>
            <person name="Song L."/>
            <person name="Wang Q."/>
            <person name="Wang Y."/>
            <person name="Wang Z."/>
            <person name="White J."/>
            <person name="Willingham D."/>
            <person name="Wu H."/>
            <person name="Yao Z."/>
            <person name="Zhan M."/>
            <person name="Zhang G."/>
            <person name="Chissoe S."/>
            <person name="Murray J."/>
            <person name="Miller N."/>
            <person name="Minx P."/>
            <person name="Fulton R."/>
            <person name="Johnson D."/>
            <person name="Bemis G."/>
            <person name="Bentley D."/>
            <person name="Bradshaw H."/>
            <person name="Bourne S."/>
            <person name="Cordes M."/>
            <person name="Du Z."/>
            <person name="Fulton L."/>
            <person name="Goela D."/>
            <person name="Graves T."/>
            <person name="Hawkins J."/>
            <person name="Hinds K."/>
            <person name="Kemp K."/>
            <person name="Latreille P."/>
            <person name="Layman D."/>
            <person name="Ozersky P."/>
            <person name="Rohlfing T."/>
            <person name="Scheet P."/>
            <person name="Walker C."/>
            <person name="Wamsley A."/>
            <person name="Wohldmann P."/>
            <person name="Pepin K."/>
            <person name="Nelson J."/>
            <person name="Korf I."/>
            <person name="Bedell J.A."/>
            <person name="Hillier L.W."/>
            <person name="Mardis E."/>
            <person name="Waterston R."/>
            <person name="Wilson R."/>
            <person name="Emanuel B.S."/>
            <person name="Shaikh T."/>
            <person name="Kurahashi H."/>
            <person name="Saitta S."/>
            <person name="Budarf M.L."/>
            <person name="McDermid H.E."/>
            <person name="Johnson A."/>
            <person name="Wong A.C.C."/>
            <person name="Morrow B.E."/>
            <person name="Edelmann L."/>
            <person name="Kim U.J."/>
            <person name="Shizuya H."/>
            <person name="Simon M.I."/>
            <person name="Dumanski J.P."/>
            <person name="Peyrard M."/>
            <person name="Kedra D."/>
            <person name="Seroussi E."/>
            <person name="Fransson I."/>
            <person name="Tapia I."/>
            <person name="Bruder C.E."/>
            <person name="O'Brien K.P."/>
            <person name="Wilkinson P."/>
            <person name="Bodenteich A."/>
            <person name="Hartman K."/>
            <person name="Hu X."/>
            <person name="Khan A.S."/>
            <person name="Lane L."/>
            <person name="Tilahun Y."/>
            <person name="Wright H."/>
        </authorList>
    </citation>
    <scope>NUCLEOTIDE SEQUENCE [LARGE SCALE GENOMIC DNA]</scope>
</reference>
<reference key="4">
    <citation type="journal article" date="2004" name="Genome Res.">
        <title>The status, quality, and expansion of the NIH full-length cDNA project: the Mammalian Gene Collection (MGC).</title>
        <authorList>
            <consortium name="The MGC Project Team"/>
        </authorList>
    </citation>
    <scope>NUCLEOTIDE SEQUENCE [LARGE SCALE MRNA]</scope>
    <scope>VARIANT GLY-70</scope>
</reference>
<reference key="5">
    <citation type="journal article" date="2007" name="Genomics">
        <title>hORFeome v3.1: a resource of human open reading frames representing over 10,000 human genes.</title>
        <authorList>
            <person name="Lamesch P."/>
            <person name="Li N."/>
            <person name="Milstein S."/>
            <person name="Fan C."/>
            <person name="Hao T."/>
            <person name="Szabo G."/>
            <person name="Hu Z."/>
            <person name="Venkatesan K."/>
            <person name="Bethel G."/>
            <person name="Martin P."/>
            <person name="Rogers J."/>
            <person name="Lawlor S."/>
            <person name="McLaren S."/>
            <person name="Dricot A."/>
            <person name="Borick H."/>
            <person name="Cusick M.E."/>
            <person name="Vandenhaute J."/>
            <person name="Dunham I."/>
            <person name="Hill D.E."/>
            <person name="Vidal M."/>
        </authorList>
    </citation>
    <scope>NUCLEOTIDE SEQUENCE [LARGE SCALE MRNA] OF 1-212</scope>
</reference>
<reference key="6">
    <citation type="journal article" date="2008" name="Hum. Genet.">
        <title>The human gamma-glutamyltransferase gene family.</title>
        <authorList>
            <person name="Heisterkamp N."/>
            <person name="Groffen J."/>
            <person name="Warburton D."/>
            <person name="Sneddon T.P."/>
        </authorList>
    </citation>
    <scope>NOMENCLATURE</scope>
</reference>
<organism>
    <name type="scientific">Homo sapiens</name>
    <name type="common">Human</name>
    <dbReference type="NCBI Taxonomy" id="9606"/>
    <lineage>
        <taxon>Eukaryota</taxon>
        <taxon>Metazoa</taxon>
        <taxon>Chordata</taxon>
        <taxon>Craniata</taxon>
        <taxon>Vertebrata</taxon>
        <taxon>Euteleostomi</taxon>
        <taxon>Mammalia</taxon>
        <taxon>Eutheria</taxon>
        <taxon>Euarchontoglires</taxon>
        <taxon>Primates</taxon>
        <taxon>Haplorrhini</taxon>
        <taxon>Catarrhini</taxon>
        <taxon>Hominidae</taxon>
        <taxon>Homo</taxon>
    </lineage>
</organism>
<feature type="chain" id="PRO_0000205982" description="Glutathione hydrolase light chain 2">
    <location>
        <begin position="1"/>
        <end position="218"/>
    </location>
</feature>
<feature type="active site" description="Nucleophile" evidence="1">
    <location>
        <position position="37"/>
    </location>
</feature>
<feature type="binding site" evidence="1">
    <location>
        <position position="55"/>
    </location>
    <ligand>
        <name>L-glutamate</name>
        <dbReference type="ChEBI" id="CHEBI:29985"/>
    </ligand>
</feature>
<feature type="binding site" evidence="1">
    <location>
        <position position="76"/>
    </location>
    <ligand>
        <name>L-glutamate</name>
        <dbReference type="ChEBI" id="CHEBI:29985"/>
    </ligand>
</feature>
<feature type="binding site" evidence="1">
    <location>
        <begin position="107"/>
        <end position="108"/>
    </location>
    <ligand>
        <name>L-glutamate</name>
        <dbReference type="ChEBI" id="CHEBI:29985"/>
    </ligand>
</feature>
<feature type="sequence variant" id="VAR_035113" description="In dbSNP:rs2904923." evidence="2 3">
    <original>E</original>
    <variation>G</variation>
    <location>
        <position position="70"/>
    </location>
</feature>
<feature type="sequence variant" id="VAR_055836" description="In dbSNP:rs2330126.">
    <original>D</original>
    <variation>N</variation>
    <location>
        <position position="75"/>
    </location>
</feature>
<feature type="sequence conflict" description="In Ref. 1; CAA67421." evidence="4" ref="1">
    <original>A</original>
    <variation>R</variation>
    <location>
        <position position="8"/>
    </location>
</feature>
<feature type="sequence conflict" description="In Ref. 1; CAA67421." evidence="4" ref="1">
    <original>E</original>
    <variation>V</variation>
    <location>
        <position position="214"/>
    </location>
</feature>
<sequence>MTSEFFAAQLRAQISDDTTHPISYYKPEFYTPVDGGTAHLSVVAEDGSAVSATSTINLYFGSKVRSPVSEILFNDEMDDFSSPNITNEFGVPPSPANFIQPGKQPLSSMCPTIMVGQDGQPPSHADHTPMPQAIIYNLWFGYDVKRAVEEPRLHNQLLPNVTTVERNIDQAVTAALETRHHHTQIASTFIAVVQAIVRTAGGWAAASDSRKGGEPAGY</sequence>
<dbReference type="EMBL" id="X98922">
    <property type="protein sequence ID" value="CAA67421.1"/>
    <property type="status" value="ALT_SEQ"/>
    <property type="molecule type" value="mRNA"/>
</dbReference>
<dbReference type="EMBL" id="D87002">
    <property type="protein sequence ID" value="BAA20001.1"/>
    <property type="status" value="ALT_SEQ"/>
    <property type="molecule type" value="Genomic_DNA"/>
</dbReference>
<dbReference type="EMBL" id="AC002308">
    <property type="status" value="NOT_ANNOTATED_CDS"/>
    <property type="molecule type" value="Genomic_DNA"/>
</dbReference>
<dbReference type="EMBL" id="BC069534">
    <property type="protein sequence ID" value="AAH69534.1"/>
    <property type="molecule type" value="mRNA"/>
</dbReference>
<dbReference type="EMBL" id="EL736203">
    <property type="status" value="NOT_ANNOTATED_CDS"/>
    <property type="molecule type" value="mRNA"/>
</dbReference>
<dbReference type="CCDS" id="CCDS13802.2"/>
<dbReference type="PIR" id="S74240">
    <property type="entry name" value="S74240"/>
</dbReference>
<dbReference type="RefSeq" id="NP_001269808.1">
    <property type="nucleotide sequence ID" value="NM_001282879.1"/>
</dbReference>
<dbReference type="RefSeq" id="NP_954578.2">
    <property type="nucleotide sequence ID" value="NM_199127.3"/>
</dbReference>
<dbReference type="SMR" id="Q14390"/>
<dbReference type="BioGRID" id="124807">
    <property type="interactions" value="2"/>
</dbReference>
<dbReference type="FunCoup" id="Q14390">
    <property type="interactions" value="1"/>
</dbReference>
<dbReference type="IntAct" id="Q14390">
    <property type="interactions" value="1"/>
</dbReference>
<dbReference type="STRING" id="9606.ENSP00000415676"/>
<dbReference type="MEROPS" id="T03.006"/>
<dbReference type="MEROPS" id="T03.016"/>
<dbReference type="GlyConnect" id="1260">
    <property type="glycosylation" value="8 N-Linked glycans (1 site)"/>
</dbReference>
<dbReference type="GlyCosmos" id="Q14390">
    <property type="glycosylation" value="1 site, 8 glycans"/>
</dbReference>
<dbReference type="GlyGen" id="Q14390">
    <property type="glycosylation" value="2 sites, 8 N-linked glycans (1 site)"/>
</dbReference>
<dbReference type="iPTMnet" id="Q14390"/>
<dbReference type="PhosphoSitePlus" id="Q14390"/>
<dbReference type="BioMuta" id="GGTLC2"/>
<dbReference type="DMDM" id="294862536"/>
<dbReference type="jPOST" id="Q14390"/>
<dbReference type="MassIVE" id="Q14390"/>
<dbReference type="PaxDb" id="9606-ENSP00000419751"/>
<dbReference type="PeptideAtlas" id="Q14390"/>
<dbReference type="Antibodypedia" id="54292">
    <property type="antibodies" value="79 antibodies from 12 providers"/>
</dbReference>
<dbReference type="DNASU" id="91227"/>
<dbReference type="Ensembl" id="ENST00000448514.3">
    <property type="protein sequence ID" value="ENSP00000415676.2"/>
    <property type="gene ID" value="ENSG00000100121.14"/>
</dbReference>
<dbReference type="Ensembl" id="ENST00000480559.6">
    <property type="protein sequence ID" value="ENSP00000419751.1"/>
    <property type="gene ID" value="ENSG00000100121.14"/>
</dbReference>
<dbReference type="GeneID" id="91227"/>
<dbReference type="KEGG" id="hsa:91227"/>
<dbReference type="MANE-Select" id="ENST00000448514.3">
    <property type="protein sequence ID" value="ENSP00000415676.2"/>
    <property type="RefSeq nucleotide sequence ID" value="NM_199127.3"/>
    <property type="RefSeq protein sequence ID" value="NP_954578.2"/>
</dbReference>
<dbReference type="UCSC" id="uc010gtt.3">
    <property type="organism name" value="human"/>
</dbReference>
<dbReference type="AGR" id="HGNC:18596"/>
<dbReference type="CTD" id="91227"/>
<dbReference type="DisGeNET" id="91227"/>
<dbReference type="GeneCards" id="GGTLC2"/>
<dbReference type="HGNC" id="HGNC:18596">
    <property type="gene designation" value="GGTLC2"/>
</dbReference>
<dbReference type="HPA" id="ENSG00000100121">
    <property type="expression patterns" value="Tissue enriched (testis)"/>
</dbReference>
<dbReference type="MIM" id="612339">
    <property type="type" value="gene"/>
</dbReference>
<dbReference type="neXtProt" id="NX_Q14390"/>
<dbReference type="OpenTargets" id="ENSG00000100121"/>
<dbReference type="PharmGKB" id="PA162389523"/>
<dbReference type="VEuPathDB" id="HostDB:ENSG00000100121"/>
<dbReference type="eggNOG" id="KOG2410">
    <property type="taxonomic scope" value="Eukaryota"/>
</dbReference>
<dbReference type="GeneTree" id="ENSGT00940000154601"/>
<dbReference type="InParanoid" id="Q14390"/>
<dbReference type="OrthoDB" id="1081007at2759"/>
<dbReference type="PAN-GO" id="Q14390">
    <property type="GO annotations" value="0 GO annotations based on evolutionary models"/>
</dbReference>
<dbReference type="PhylomeDB" id="Q14390"/>
<dbReference type="PathwayCommons" id="Q14390"/>
<dbReference type="SignaLink" id="Q14390"/>
<dbReference type="BioGRID-ORCS" id="91227">
    <property type="hits" value="681 hits in 1043 CRISPR screens"/>
</dbReference>
<dbReference type="GenomeRNAi" id="91227"/>
<dbReference type="Pharos" id="Q14390">
    <property type="development level" value="Tbio"/>
</dbReference>
<dbReference type="PRO" id="PR:Q14390"/>
<dbReference type="Proteomes" id="UP000005640">
    <property type="component" value="Chromosome 22"/>
</dbReference>
<dbReference type="RNAct" id="Q14390">
    <property type="molecule type" value="protein"/>
</dbReference>
<dbReference type="Bgee" id="ENSG00000100121">
    <property type="expression patterns" value="Expressed in right testis and 96 other cell types or tissues"/>
</dbReference>
<dbReference type="ExpressionAtlas" id="Q14390">
    <property type="expression patterns" value="baseline and differential"/>
</dbReference>
<dbReference type="GO" id="GO:0070062">
    <property type="term" value="C:extracellular exosome"/>
    <property type="evidence" value="ECO:0007005"/>
    <property type="project" value="UniProtKB"/>
</dbReference>
<dbReference type="GO" id="GO:0036374">
    <property type="term" value="F:glutathione hydrolase activity"/>
    <property type="evidence" value="ECO:0007669"/>
    <property type="project" value="InterPro"/>
</dbReference>
<dbReference type="GO" id="GO:0006751">
    <property type="term" value="P:glutathione catabolic process"/>
    <property type="evidence" value="ECO:0007669"/>
    <property type="project" value="InterPro"/>
</dbReference>
<dbReference type="GO" id="GO:1901750">
    <property type="term" value="P:leukotriene D4 biosynthetic process"/>
    <property type="evidence" value="ECO:0000250"/>
    <property type="project" value="UniProtKB"/>
</dbReference>
<dbReference type="FunFam" id="3.60.20.40:FF:000007">
    <property type="entry name" value="Glutathione hydrolase 1 proenzyme"/>
    <property type="match status" value="1"/>
</dbReference>
<dbReference type="Gene3D" id="1.10.246.130">
    <property type="match status" value="1"/>
</dbReference>
<dbReference type="Gene3D" id="3.60.20.40">
    <property type="match status" value="1"/>
</dbReference>
<dbReference type="InterPro" id="IPR055262">
    <property type="entry name" value="GGT_CS"/>
</dbReference>
<dbReference type="InterPro" id="IPR043138">
    <property type="entry name" value="GGT_lsub_C"/>
</dbReference>
<dbReference type="InterPro" id="IPR000101">
    <property type="entry name" value="GGT_peptidase"/>
</dbReference>
<dbReference type="InterPro" id="IPR043137">
    <property type="entry name" value="GGT_ssub"/>
</dbReference>
<dbReference type="InterPro" id="IPR029055">
    <property type="entry name" value="Ntn_hydrolases_N"/>
</dbReference>
<dbReference type="PANTHER" id="PTHR45027:SF5">
    <property type="entry name" value="GLUTATHIONE HYDROLASE LIGHT CHAIN 2-RELATED"/>
    <property type="match status" value="1"/>
</dbReference>
<dbReference type="PANTHER" id="PTHR45027">
    <property type="entry name" value="PUTATIVE GLUTATHIONE HYDROLASE LIGHT CHAIN"/>
    <property type="match status" value="1"/>
</dbReference>
<dbReference type="Pfam" id="PF01019">
    <property type="entry name" value="G_glu_transpept"/>
    <property type="match status" value="1"/>
</dbReference>
<dbReference type="PRINTS" id="PR01210">
    <property type="entry name" value="GGTRANSPTASE"/>
</dbReference>
<dbReference type="SUPFAM" id="SSF56235">
    <property type="entry name" value="N-terminal nucleophile aminohydrolases (Ntn hydrolases)"/>
    <property type="match status" value="1"/>
</dbReference>
<dbReference type="PROSITE" id="PS00462">
    <property type="entry name" value="G_GLU_TRANSPEPTIDASE"/>
    <property type="match status" value="1"/>
</dbReference>